<organism>
    <name type="scientific">Sphingopyxis alaskensis (strain DSM 13593 / LMG 18877 / RB2256)</name>
    <name type="common">Sphingomonas alaskensis</name>
    <dbReference type="NCBI Taxonomy" id="317655"/>
    <lineage>
        <taxon>Bacteria</taxon>
        <taxon>Pseudomonadati</taxon>
        <taxon>Pseudomonadota</taxon>
        <taxon>Alphaproteobacteria</taxon>
        <taxon>Sphingomonadales</taxon>
        <taxon>Sphingomonadaceae</taxon>
        <taxon>Sphingopyxis</taxon>
    </lineage>
</organism>
<name>Y338_SPHAL</name>
<comment type="similarity">
    <text evidence="1">Belongs to the UPF0145 family.</text>
</comment>
<proteinExistence type="inferred from homology"/>
<protein>
    <recommendedName>
        <fullName evidence="1">UPF0145 protein Sala_0338</fullName>
    </recommendedName>
</protein>
<reference key="1">
    <citation type="journal article" date="2009" name="Proc. Natl. Acad. Sci. U.S.A.">
        <title>The genomic basis of trophic strategy in marine bacteria.</title>
        <authorList>
            <person name="Lauro F.M."/>
            <person name="McDougald D."/>
            <person name="Thomas T."/>
            <person name="Williams T.J."/>
            <person name="Egan S."/>
            <person name="Rice S."/>
            <person name="DeMaere M.Z."/>
            <person name="Ting L."/>
            <person name="Ertan H."/>
            <person name="Johnson J."/>
            <person name="Ferriera S."/>
            <person name="Lapidus A."/>
            <person name="Anderson I."/>
            <person name="Kyrpides N."/>
            <person name="Munk A.C."/>
            <person name="Detter C."/>
            <person name="Han C.S."/>
            <person name="Brown M.V."/>
            <person name="Robb F.T."/>
            <person name="Kjelleberg S."/>
            <person name="Cavicchioli R."/>
        </authorList>
    </citation>
    <scope>NUCLEOTIDE SEQUENCE [LARGE SCALE GENOMIC DNA]</scope>
    <source>
        <strain>DSM 13593 / LMG 18877 / RB2256</strain>
    </source>
</reference>
<feature type="chain" id="PRO_1000013031" description="UPF0145 protein Sala_0338">
    <location>
        <begin position="1"/>
        <end position="105"/>
    </location>
</feature>
<keyword id="KW-1185">Reference proteome</keyword>
<dbReference type="EMBL" id="CP000356">
    <property type="protein sequence ID" value="ABF52061.1"/>
    <property type="molecule type" value="Genomic_DNA"/>
</dbReference>
<dbReference type="RefSeq" id="WP_011540652.1">
    <property type="nucleotide sequence ID" value="NC_008048.1"/>
</dbReference>
<dbReference type="SMR" id="Q1GWB1"/>
<dbReference type="STRING" id="317655.Sala_0338"/>
<dbReference type="KEGG" id="sal:Sala_0338"/>
<dbReference type="eggNOG" id="COG0393">
    <property type="taxonomic scope" value="Bacteria"/>
</dbReference>
<dbReference type="HOGENOM" id="CLU_117144_3_2_5"/>
<dbReference type="OrthoDB" id="9796448at2"/>
<dbReference type="Proteomes" id="UP000006578">
    <property type="component" value="Chromosome"/>
</dbReference>
<dbReference type="Gene3D" id="3.30.110.70">
    <property type="entry name" value="Hypothetical protein apc22750. Chain B"/>
    <property type="match status" value="1"/>
</dbReference>
<dbReference type="HAMAP" id="MF_00338">
    <property type="entry name" value="UPF0145"/>
    <property type="match status" value="1"/>
</dbReference>
<dbReference type="InterPro" id="IPR035439">
    <property type="entry name" value="UPF0145_dom_sf"/>
</dbReference>
<dbReference type="InterPro" id="IPR002765">
    <property type="entry name" value="UPF0145_YbjQ-like"/>
</dbReference>
<dbReference type="PANTHER" id="PTHR34068">
    <property type="entry name" value="UPF0145 PROTEIN YBJQ"/>
    <property type="match status" value="1"/>
</dbReference>
<dbReference type="PANTHER" id="PTHR34068:SF1">
    <property type="entry name" value="UPF0145 PROTEIN YBJQ"/>
    <property type="match status" value="1"/>
</dbReference>
<dbReference type="Pfam" id="PF01906">
    <property type="entry name" value="YbjQ_1"/>
    <property type="match status" value="1"/>
</dbReference>
<dbReference type="SUPFAM" id="SSF117782">
    <property type="entry name" value="YbjQ-like"/>
    <property type="match status" value="1"/>
</dbReference>
<sequence>MFSTTTNNIEGHPVREYLGIVTGEVIVGANLFRDLFASITDIVGGRSGKYEDVLARARKEALGEMEAEAAKLGGNAVIGVDIDYEVLGQNGSMLMVSASGTAVVI</sequence>
<evidence type="ECO:0000255" key="1">
    <source>
        <dbReference type="HAMAP-Rule" id="MF_00338"/>
    </source>
</evidence>
<accession>Q1GWB1</accession>
<gene>
    <name type="ordered locus">Sala_0338</name>
</gene>